<name>DPYL4_HUMAN</name>
<reference key="1">
    <citation type="submission" date="1997-08" db="EMBL/GenBank/DDBJ databases">
        <title>Novel members of dihydropyrimidinase related protein family.</title>
        <authorList>
            <person name="Hamajima N."/>
            <person name="Kato Y."/>
            <person name="Kouwaki M."/>
            <person name="Wada Y."/>
            <person name="Sasaski M."/>
            <person name="Nonaka M."/>
        </authorList>
    </citation>
    <scope>NUCLEOTIDE SEQUENCE [MRNA]</scope>
    <source>
        <tissue>Brain</tissue>
    </source>
</reference>
<reference key="2">
    <citation type="journal article" date="2004" name="Nature">
        <title>The DNA sequence and comparative analysis of human chromosome 10.</title>
        <authorList>
            <person name="Deloukas P."/>
            <person name="Earthrowl M.E."/>
            <person name="Grafham D.V."/>
            <person name="Rubenfield M."/>
            <person name="French L."/>
            <person name="Steward C.A."/>
            <person name="Sims S.K."/>
            <person name="Jones M.C."/>
            <person name="Searle S."/>
            <person name="Scott C."/>
            <person name="Howe K."/>
            <person name="Hunt S.E."/>
            <person name="Andrews T.D."/>
            <person name="Gilbert J.G.R."/>
            <person name="Swarbreck D."/>
            <person name="Ashurst J.L."/>
            <person name="Taylor A."/>
            <person name="Battles J."/>
            <person name="Bird C.P."/>
            <person name="Ainscough R."/>
            <person name="Almeida J.P."/>
            <person name="Ashwell R.I.S."/>
            <person name="Ambrose K.D."/>
            <person name="Babbage A.K."/>
            <person name="Bagguley C.L."/>
            <person name="Bailey J."/>
            <person name="Banerjee R."/>
            <person name="Bates K."/>
            <person name="Beasley H."/>
            <person name="Bray-Allen S."/>
            <person name="Brown A.J."/>
            <person name="Brown J.Y."/>
            <person name="Burford D.C."/>
            <person name="Burrill W."/>
            <person name="Burton J."/>
            <person name="Cahill P."/>
            <person name="Camire D."/>
            <person name="Carter N.P."/>
            <person name="Chapman J.C."/>
            <person name="Clark S.Y."/>
            <person name="Clarke G."/>
            <person name="Clee C.M."/>
            <person name="Clegg S."/>
            <person name="Corby N."/>
            <person name="Coulson A."/>
            <person name="Dhami P."/>
            <person name="Dutta I."/>
            <person name="Dunn M."/>
            <person name="Faulkner L."/>
            <person name="Frankish A."/>
            <person name="Frankland J.A."/>
            <person name="Garner P."/>
            <person name="Garnett J."/>
            <person name="Gribble S."/>
            <person name="Griffiths C."/>
            <person name="Grocock R."/>
            <person name="Gustafson E."/>
            <person name="Hammond S."/>
            <person name="Harley J.L."/>
            <person name="Hart E."/>
            <person name="Heath P.D."/>
            <person name="Ho T.P."/>
            <person name="Hopkins B."/>
            <person name="Horne J."/>
            <person name="Howden P.J."/>
            <person name="Huckle E."/>
            <person name="Hynds C."/>
            <person name="Johnson C."/>
            <person name="Johnson D."/>
            <person name="Kana A."/>
            <person name="Kay M."/>
            <person name="Kimberley A.M."/>
            <person name="Kershaw J.K."/>
            <person name="Kokkinaki M."/>
            <person name="Laird G.K."/>
            <person name="Lawlor S."/>
            <person name="Lee H.M."/>
            <person name="Leongamornlert D.A."/>
            <person name="Laird G."/>
            <person name="Lloyd C."/>
            <person name="Lloyd D.M."/>
            <person name="Loveland J."/>
            <person name="Lovell J."/>
            <person name="McLaren S."/>
            <person name="McLay K.E."/>
            <person name="McMurray A."/>
            <person name="Mashreghi-Mohammadi M."/>
            <person name="Matthews L."/>
            <person name="Milne S."/>
            <person name="Nickerson T."/>
            <person name="Nguyen M."/>
            <person name="Overton-Larty E."/>
            <person name="Palmer S.A."/>
            <person name="Pearce A.V."/>
            <person name="Peck A.I."/>
            <person name="Pelan S."/>
            <person name="Phillimore B."/>
            <person name="Porter K."/>
            <person name="Rice C.M."/>
            <person name="Rogosin A."/>
            <person name="Ross M.T."/>
            <person name="Sarafidou T."/>
            <person name="Sehra H.K."/>
            <person name="Shownkeen R."/>
            <person name="Skuce C.D."/>
            <person name="Smith M."/>
            <person name="Standring L."/>
            <person name="Sycamore N."/>
            <person name="Tester J."/>
            <person name="Thorpe A."/>
            <person name="Torcasso W."/>
            <person name="Tracey A."/>
            <person name="Tromans A."/>
            <person name="Tsolas J."/>
            <person name="Wall M."/>
            <person name="Walsh J."/>
            <person name="Wang H."/>
            <person name="Weinstock K."/>
            <person name="West A.P."/>
            <person name="Willey D.L."/>
            <person name="Whitehead S.L."/>
            <person name="Wilming L."/>
            <person name="Wray P.W."/>
            <person name="Young L."/>
            <person name="Chen Y."/>
            <person name="Lovering R.C."/>
            <person name="Moschonas N.K."/>
            <person name="Siebert R."/>
            <person name="Fechtel K."/>
            <person name="Bentley D."/>
            <person name="Durbin R.M."/>
            <person name="Hubbard T."/>
            <person name="Doucette-Stamm L."/>
            <person name="Beck S."/>
            <person name="Smith D.R."/>
            <person name="Rogers J."/>
        </authorList>
    </citation>
    <scope>NUCLEOTIDE SEQUENCE [LARGE SCALE GENOMIC DNA]</scope>
</reference>
<reference key="3">
    <citation type="submission" date="2005-09" db="EMBL/GenBank/DDBJ databases">
        <authorList>
            <person name="Mural R.J."/>
            <person name="Istrail S."/>
            <person name="Sutton G.G."/>
            <person name="Florea L."/>
            <person name="Halpern A.L."/>
            <person name="Mobarry C.M."/>
            <person name="Lippert R."/>
            <person name="Walenz B."/>
            <person name="Shatkay H."/>
            <person name="Dew I."/>
            <person name="Miller J.R."/>
            <person name="Flanigan M.J."/>
            <person name="Edwards N.J."/>
            <person name="Bolanos R."/>
            <person name="Fasulo D."/>
            <person name="Halldorsson B.V."/>
            <person name="Hannenhalli S."/>
            <person name="Turner R."/>
            <person name="Yooseph S."/>
            <person name="Lu F."/>
            <person name="Nusskern D.R."/>
            <person name="Shue B.C."/>
            <person name="Zheng X.H."/>
            <person name="Zhong F."/>
            <person name="Delcher A.L."/>
            <person name="Huson D.H."/>
            <person name="Kravitz S.A."/>
            <person name="Mouchard L."/>
            <person name="Reinert K."/>
            <person name="Remington K.A."/>
            <person name="Clark A.G."/>
            <person name="Waterman M.S."/>
            <person name="Eichler E.E."/>
            <person name="Adams M.D."/>
            <person name="Hunkapiller M.W."/>
            <person name="Myers E.W."/>
            <person name="Venter J.C."/>
        </authorList>
    </citation>
    <scope>NUCLEOTIDE SEQUENCE [LARGE SCALE GENOMIC DNA]</scope>
</reference>
<reference key="4">
    <citation type="journal article" date="2004" name="Genome Res.">
        <title>The status, quality, and expansion of the NIH full-length cDNA project: the Mammalian Gene Collection (MGC).</title>
        <authorList>
            <consortium name="The MGC Project Team"/>
        </authorList>
    </citation>
    <scope>NUCLEOTIDE SEQUENCE [LARGE SCALE MRNA]</scope>
    <source>
        <tissue>Brain</tissue>
    </source>
</reference>
<reference key="5">
    <citation type="journal article" date="1998" name="Eur. J. Biochem.">
        <title>The Ulip family phosphoproteins -- common and specific properties.</title>
        <authorList>
            <person name="Byk T."/>
            <person name="Ozon S."/>
            <person name="Sobel A."/>
        </authorList>
    </citation>
    <scope>NUCLEOTIDE SEQUENCE [MRNA] OF 1-553</scope>
    <source>
        <tissue>Retina</tissue>
    </source>
</reference>
<reference key="6">
    <citation type="submission" date="2009-01" db="UniProtKB">
        <authorList>
            <person name="Lubec G."/>
            <person name="Chen W.-Q."/>
        </authorList>
    </citation>
    <scope>PROTEIN SEQUENCE OF 401-415</scope>
    <scope>IDENTIFICATION BY MASS SPECTROMETRY</scope>
    <source>
        <tissue>Fetal brain</tissue>
    </source>
</reference>
<reference key="7">
    <citation type="journal article" date="2014" name="Nat. Commun.">
        <title>Amino- and carboxyl-terminal domains of Filamin-A interact with CRMP1 to mediate Sema3A signalling.</title>
        <authorList>
            <person name="Nakamura F."/>
            <person name="Kumeta K."/>
            <person name="Hida T."/>
            <person name="Isono T."/>
            <person name="Nakayama Y."/>
            <person name="Kuramata-Matsuoka E."/>
            <person name="Yamashita N."/>
            <person name="Uchida Y."/>
            <person name="Ogura K."/>
            <person name="Gengyo-Ando K."/>
            <person name="Mitani S."/>
            <person name="Ogino T."/>
            <person name="Goshima Y."/>
        </authorList>
    </citation>
    <scope>INTERACTION WITH FLNA</scope>
</reference>
<organism>
    <name type="scientific">Homo sapiens</name>
    <name type="common">Human</name>
    <dbReference type="NCBI Taxonomy" id="9606"/>
    <lineage>
        <taxon>Eukaryota</taxon>
        <taxon>Metazoa</taxon>
        <taxon>Chordata</taxon>
        <taxon>Craniata</taxon>
        <taxon>Vertebrata</taxon>
        <taxon>Euteleostomi</taxon>
        <taxon>Mammalia</taxon>
        <taxon>Eutheria</taxon>
        <taxon>Euarchontoglires</taxon>
        <taxon>Primates</taxon>
        <taxon>Haplorrhini</taxon>
        <taxon>Catarrhini</taxon>
        <taxon>Hominidae</taxon>
        <taxon>Homo</taxon>
    </lineage>
</organism>
<gene>
    <name type="primary">DPYSL4</name>
    <name type="synonym">CRMP3</name>
    <name type="synonym">ULIP4</name>
</gene>
<comment type="function">
    <text evidence="1">Necessary for signaling by class 3 semaphorins and subsequent remodeling of the cytoskeleton. Plays a role in axon guidance, neuronal growth cone collapse and cell migration (By similarity).</text>
</comment>
<comment type="subunit">
    <text evidence="1 2 3">Homotetramer, and heterotetramer with CRMP1, DPYSL2, DPYSL3 or DPYSL5 (By similarity). Interacts with PLEXA1 (By similarity). Interacts with FLNA (PubMed:25358863).</text>
</comment>
<comment type="interaction">
    <interactant intactId="EBI-719542">
        <id>O14531</id>
    </interactant>
    <interactant intactId="EBI-1104711">
        <id>Q16555</id>
        <label>DPYSL2</label>
    </interactant>
    <organismsDiffer>false</organismsDiffer>
    <experiments>3</experiments>
</comment>
<comment type="interaction">
    <interactant intactId="EBI-719542">
        <id>O14531</id>
    </interactant>
    <interactant intactId="EBI-25860013">
        <id>P28799-2</id>
        <label>GRN</label>
    </interactant>
    <organismsDiffer>false</organismsDiffer>
    <experiments>3</experiments>
</comment>
<comment type="interaction">
    <interactant intactId="EBI-719542">
        <id>O14531</id>
    </interactant>
    <interactant intactId="EBI-10975473">
        <id>O60333-2</id>
        <label>KIF1B</label>
    </interactant>
    <organismsDiffer>false</organismsDiffer>
    <experiments>3</experiments>
</comment>
<comment type="interaction">
    <interactant intactId="EBI-719542">
        <id>O14531</id>
    </interactant>
    <interactant intactId="EBI-476586">
        <id>P17612</id>
        <label>PRKACA</label>
    </interactant>
    <organismsDiffer>false</organismsDiffer>
    <experiments>3</experiments>
</comment>
<comment type="interaction">
    <interactant intactId="EBI-719542">
        <id>O14531</id>
    </interactant>
    <interactant intactId="EBI-740322">
        <id>Q93062</id>
        <label>RBPMS</label>
    </interactant>
    <organismsDiffer>false</organismsDiffer>
    <experiments>3</experiments>
</comment>
<comment type="interaction">
    <interactant intactId="EBI-719542">
        <id>O14531</id>
    </interactant>
    <interactant intactId="EBI-5235340">
        <id>Q7Z699</id>
        <label>SPRED1</label>
    </interactant>
    <organismsDiffer>false</organismsDiffer>
    <experiments>3</experiments>
</comment>
<comment type="interaction">
    <interactant intactId="EBI-719542">
        <id>O14531</id>
    </interactant>
    <interactant intactId="EBI-296151">
        <id>P37173</id>
        <label>TGFBR2</label>
    </interactant>
    <organismsDiffer>false</organismsDiffer>
    <experiments>3</experiments>
</comment>
<comment type="interaction">
    <interactant intactId="EBI-719542">
        <id>O14531</id>
    </interactant>
    <interactant intactId="EBI-358993">
        <id>Q15645</id>
        <label>TRIP13</label>
    </interactant>
    <organismsDiffer>false</organismsDiffer>
    <experiments>3</experiments>
</comment>
<comment type="interaction">
    <interactant intactId="EBI-719542">
        <id>O14531</id>
    </interactant>
    <interactant intactId="EBI-720609">
        <id>O76024</id>
        <label>WFS1</label>
    </interactant>
    <organismsDiffer>false</organismsDiffer>
    <experiments>3</experiments>
</comment>
<comment type="subcellular location">
    <subcellularLocation>
        <location evidence="1">Cytoplasm</location>
    </subcellularLocation>
</comment>
<comment type="similarity">
    <text evidence="4">Belongs to the metallo-dependent hydrolases superfamily. Hydantoinase/dihydropyrimidinase family.</text>
</comment>
<comment type="caution">
    <text evidence="4">Lacks most of the conserved residues that are essential for binding the metal cofactor and hence for dihydropyrimidinase activity. Its enzyme activity is therefore unsure.</text>
</comment>
<dbReference type="EMBL" id="AB006713">
    <property type="protein sequence ID" value="BAA21886.1"/>
    <property type="molecule type" value="mRNA"/>
</dbReference>
<dbReference type="EMBL" id="AL512622">
    <property type="status" value="NOT_ANNOTATED_CDS"/>
    <property type="molecule type" value="Genomic_DNA"/>
</dbReference>
<dbReference type="EMBL" id="CH471066">
    <property type="protein sequence ID" value="EAW49132.1"/>
    <property type="molecule type" value="Genomic_DNA"/>
</dbReference>
<dbReference type="EMBL" id="CH471066">
    <property type="protein sequence ID" value="EAW49134.1"/>
    <property type="molecule type" value="Genomic_DNA"/>
</dbReference>
<dbReference type="EMBL" id="CH471066">
    <property type="protein sequence ID" value="EAW49135.1"/>
    <property type="molecule type" value="Genomic_DNA"/>
</dbReference>
<dbReference type="EMBL" id="BC136329">
    <property type="protein sequence ID" value="AAI36330.1"/>
    <property type="molecule type" value="mRNA"/>
</dbReference>
<dbReference type="EMBL" id="BC136330">
    <property type="protein sequence ID" value="AAI36331.1"/>
    <property type="molecule type" value="mRNA"/>
</dbReference>
<dbReference type="EMBL" id="Y10976">
    <property type="protein sequence ID" value="CAA71872.1"/>
    <property type="molecule type" value="mRNA"/>
</dbReference>
<dbReference type="CCDS" id="CCDS7665.1"/>
<dbReference type="RefSeq" id="NP_006417.2">
    <property type="nucleotide sequence ID" value="NM_006426.3"/>
</dbReference>
<dbReference type="PDB" id="5NKS">
    <property type="method" value="X-ray"/>
    <property type="resolution" value="1.80 A"/>
    <property type="chains" value="A=1-572"/>
</dbReference>
<dbReference type="PDBsum" id="5NKS"/>
<dbReference type="SMR" id="O14531"/>
<dbReference type="BioGRID" id="115821">
    <property type="interactions" value="63"/>
</dbReference>
<dbReference type="FunCoup" id="O14531">
    <property type="interactions" value="565"/>
</dbReference>
<dbReference type="IntAct" id="O14531">
    <property type="interactions" value="45"/>
</dbReference>
<dbReference type="MINT" id="O14531"/>
<dbReference type="STRING" id="9606.ENSP00000339850"/>
<dbReference type="MEROPS" id="M38.977"/>
<dbReference type="GlyGen" id="O14531">
    <property type="glycosylation" value="3 sites, 1 O-linked glycan (1 site)"/>
</dbReference>
<dbReference type="iPTMnet" id="O14531"/>
<dbReference type="PhosphoSitePlus" id="O14531"/>
<dbReference type="SwissPalm" id="O14531"/>
<dbReference type="BioMuta" id="DPYSL4"/>
<dbReference type="jPOST" id="O14531"/>
<dbReference type="MassIVE" id="O14531"/>
<dbReference type="PaxDb" id="9606-ENSP00000339850"/>
<dbReference type="PeptideAtlas" id="O14531"/>
<dbReference type="ProteomicsDB" id="48077"/>
<dbReference type="Pumba" id="O14531"/>
<dbReference type="TopDownProteomics" id="O14531"/>
<dbReference type="Antibodypedia" id="32549">
    <property type="antibodies" value="223 antibodies from 29 providers"/>
</dbReference>
<dbReference type="DNASU" id="10570"/>
<dbReference type="Ensembl" id="ENST00000338492.9">
    <property type="protein sequence ID" value="ENSP00000339850.3"/>
    <property type="gene ID" value="ENSG00000151640.13"/>
</dbReference>
<dbReference type="GeneID" id="10570"/>
<dbReference type="KEGG" id="hsa:10570"/>
<dbReference type="MANE-Select" id="ENST00000338492.9">
    <property type="protein sequence ID" value="ENSP00000339850.3"/>
    <property type="RefSeq nucleotide sequence ID" value="NM_006426.3"/>
    <property type="RefSeq protein sequence ID" value="NP_006417.2"/>
</dbReference>
<dbReference type="UCSC" id="uc009ybb.4">
    <property type="organism name" value="human"/>
</dbReference>
<dbReference type="AGR" id="HGNC:3016"/>
<dbReference type="CTD" id="10570"/>
<dbReference type="DisGeNET" id="10570"/>
<dbReference type="GeneCards" id="DPYSL4"/>
<dbReference type="HGNC" id="HGNC:3016">
    <property type="gene designation" value="DPYSL4"/>
</dbReference>
<dbReference type="HPA" id="ENSG00000151640">
    <property type="expression patterns" value="Tissue enhanced (brain, heart muscle)"/>
</dbReference>
<dbReference type="MIM" id="608407">
    <property type="type" value="gene"/>
</dbReference>
<dbReference type="neXtProt" id="NX_O14531"/>
<dbReference type="OpenTargets" id="ENSG00000151640"/>
<dbReference type="PharmGKB" id="PA27474"/>
<dbReference type="VEuPathDB" id="HostDB:ENSG00000151640"/>
<dbReference type="eggNOG" id="KOG2584">
    <property type="taxonomic scope" value="Eukaryota"/>
</dbReference>
<dbReference type="GeneTree" id="ENSGT01030000234527"/>
<dbReference type="InParanoid" id="O14531"/>
<dbReference type="OMA" id="FGFHFGI"/>
<dbReference type="OrthoDB" id="10258955at2759"/>
<dbReference type="PAN-GO" id="O14531">
    <property type="GO annotations" value="0 GO annotations based on evolutionary models"/>
</dbReference>
<dbReference type="PhylomeDB" id="O14531"/>
<dbReference type="TreeFam" id="TF314706"/>
<dbReference type="PathwayCommons" id="O14531"/>
<dbReference type="Reactome" id="R-HSA-399956">
    <property type="pathway name" value="CRMPs in Sema3A signaling"/>
</dbReference>
<dbReference type="SignaLink" id="O14531"/>
<dbReference type="BioGRID-ORCS" id="10570">
    <property type="hits" value="12 hits in 1146 CRISPR screens"/>
</dbReference>
<dbReference type="CD-CODE" id="FB4E32DD">
    <property type="entry name" value="Presynaptic clusters and postsynaptic densities"/>
</dbReference>
<dbReference type="GeneWiki" id="DPYSL4"/>
<dbReference type="GenomeRNAi" id="10570"/>
<dbReference type="Pharos" id="O14531">
    <property type="development level" value="Tbio"/>
</dbReference>
<dbReference type="PRO" id="PR:O14531"/>
<dbReference type="Proteomes" id="UP000005640">
    <property type="component" value="Chromosome 10"/>
</dbReference>
<dbReference type="RNAct" id="O14531">
    <property type="molecule type" value="protein"/>
</dbReference>
<dbReference type="Bgee" id="ENSG00000151640">
    <property type="expression patterns" value="Expressed in apex of heart and 128 other cell types or tissues"/>
</dbReference>
<dbReference type="ExpressionAtlas" id="O14531">
    <property type="expression patterns" value="baseline and differential"/>
</dbReference>
<dbReference type="GO" id="GO:0005829">
    <property type="term" value="C:cytosol"/>
    <property type="evidence" value="ECO:0000318"/>
    <property type="project" value="GO_Central"/>
</dbReference>
<dbReference type="GO" id="GO:0031005">
    <property type="term" value="F:filamin binding"/>
    <property type="evidence" value="ECO:0000353"/>
    <property type="project" value="WormBase"/>
</dbReference>
<dbReference type="GO" id="GO:0016812">
    <property type="term" value="F:hydrolase activity, acting on carbon-nitrogen (but not peptide) bonds, in cyclic amides"/>
    <property type="evidence" value="ECO:0000318"/>
    <property type="project" value="GO_Central"/>
</dbReference>
<dbReference type="GO" id="GO:0007399">
    <property type="term" value="P:nervous system development"/>
    <property type="evidence" value="ECO:0000304"/>
    <property type="project" value="ProtInc"/>
</dbReference>
<dbReference type="CDD" id="cd01314">
    <property type="entry name" value="D-HYD"/>
    <property type="match status" value="1"/>
</dbReference>
<dbReference type="FunFam" id="3.20.20.140:FF:000254">
    <property type="entry name" value="Dihydropyrimidinase like 2"/>
    <property type="match status" value="1"/>
</dbReference>
<dbReference type="FunFam" id="2.30.40.10:FF:000021">
    <property type="entry name" value="Dihydropyrimidinase-related protein 2"/>
    <property type="match status" value="1"/>
</dbReference>
<dbReference type="Gene3D" id="3.20.20.140">
    <property type="entry name" value="Metal-dependent hydrolases"/>
    <property type="match status" value="1"/>
</dbReference>
<dbReference type="Gene3D" id="2.30.40.10">
    <property type="entry name" value="Urease, subunit C, domain 1"/>
    <property type="match status" value="1"/>
</dbReference>
<dbReference type="InterPro" id="IPR006680">
    <property type="entry name" value="Amidohydro-rel"/>
</dbReference>
<dbReference type="InterPro" id="IPR011778">
    <property type="entry name" value="Hydantoinase/dihydroPyrase"/>
</dbReference>
<dbReference type="InterPro" id="IPR011059">
    <property type="entry name" value="Metal-dep_hydrolase_composite"/>
</dbReference>
<dbReference type="InterPro" id="IPR032466">
    <property type="entry name" value="Metal_Hydrolase"/>
</dbReference>
<dbReference type="InterPro" id="IPR050378">
    <property type="entry name" value="Metallo-dep_Hydrolases_sf"/>
</dbReference>
<dbReference type="NCBIfam" id="TIGR02033">
    <property type="entry name" value="D-hydantoinase"/>
    <property type="match status" value="1"/>
</dbReference>
<dbReference type="PANTHER" id="PTHR11647:SF55">
    <property type="entry name" value="DIHYDROPYRIMIDINASE-RELATED PROTEIN 4"/>
    <property type="match status" value="1"/>
</dbReference>
<dbReference type="PANTHER" id="PTHR11647">
    <property type="entry name" value="HYDRANTOINASE/DIHYDROPYRIMIDINASE FAMILY MEMBER"/>
    <property type="match status" value="1"/>
</dbReference>
<dbReference type="Pfam" id="PF01979">
    <property type="entry name" value="Amidohydro_1"/>
    <property type="match status" value="1"/>
</dbReference>
<dbReference type="SUPFAM" id="SSF51338">
    <property type="entry name" value="Composite domain of metallo-dependent hydrolases"/>
    <property type="match status" value="2"/>
</dbReference>
<dbReference type="SUPFAM" id="SSF51556">
    <property type="entry name" value="Metallo-dependent hydrolases"/>
    <property type="match status" value="1"/>
</dbReference>
<sequence length="572" mass="61878">MSFQGKKSIPRITSDRLLIRGGRIVNDDQSFYADVHVEDGLIKQIGENLIVPGGIKTIDAHGLMVLPGGVDVHTRLQMPVLGMTPADDFCQGTKAALAGGTTMILDHVFPDTGVSLLAAYEQWRERADSAACCDYSLHVDITRWHESIKEELEALVKEKGVNSFLVFMAYKDRCQCSDSQMYEIFSIIRDLGALAQVHAENGDIVEEEQKRLLELGITGPEGHVLSHPEEVEAEAVYRAVTIAKQANCPLYVTKVMSKGAADAIAQAKRRGVVVFGEPITASLGTDGSHYWSKNWAKAAAFVTSPPVNPDPTTADHLTCLLSSGDLQVTGSAHCTFTTAQKAVGKDNFALIPEGTNGIEERMSMVWEKCVASGKMDENEFVAVTSTNAAKIFNFYPRKGRVAVGSDADLVIWNPKATKIISAKTHNLNVEYNIFEGVECRGAPAVVISQGRVALEDGKMFVTPGAGRFVPRKTFPDFVYKRIKARNRLAEIHGVPRGLYDGPVHEVMVPAKPGSGAPARASCPGKISVPPVRNLHQSGFSLSGSQADDHIARRTAQKIMAPPGGRSNITSLS</sequence>
<proteinExistence type="evidence at protein level"/>
<keyword id="KW-0002">3D-structure</keyword>
<keyword id="KW-0963">Cytoplasm</keyword>
<keyword id="KW-0903">Direct protein sequencing</keyword>
<keyword id="KW-0597">Phosphoprotein</keyword>
<keyword id="KW-1267">Proteomics identification</keyword>
<keyword id="KW-1185">Reference proteome</keyword>
<protein>
    <recommendedName>
        <fullName>Dihydropyrimidinase-related protein 4</fullName>
        <shortName>DRP-4</shortName>
    </recommendedName>
    <alternativeName>
        <fullName>Collapsin response mediator protein 3</fullName>
        <shortName>CRMP-3</shortName>
    </alternativeName>
    <alternativeName>
        <fullName>UNC33-like phosphoprotein 4</fullName>
        <shortName>ULIP-4</shortName>
    </alternativeName>
</protein>
<evidence type="ECO:0000250" key="1"/>
<evidence type="ECO:0000250" key="2">
    <source>
        <dbReference type="UniProtKB" id="O35098"/>
    </source>
</evidence>
<evidence type="ECO:0000269" key="3">
    <source>
    </source>
</evidence>
<evidence type="ECO:0000305" key="4"/>
<evidence type="ECO:0007829" key="5">
    <source>
        <dbReference type="PDB" id="5NKS"/>
    </source>
</evidence>
<feature type="chain" id="PRO_0000165921" description="Dihydropyrimidinase-related protein 4">
    <location>
        <begin position="1"/>
        <end position="572"/>
    </location>
</feature>
<feature type="modified residue" description="Phosphoserine" evidence="2">
    <location>
        <position position="537"/>
    </location>
</feature>
<feature type="modified residue" description="Phosphoserine" evidence="2">
    <location>
        <position position="544"/>
    </location>
</feature>
<feature type="sequence conflict" description="In Ref. 1; BAA21886." evidence="4" ref="1">
    <original>Q</original>
    <variation>R</variation>
    <location>
        <position position="122"/>
    </location>
</feature>
<feature type="strand" evidence="5">
    <location>
        <begin position="17"/>
        <end position="21"/>
    </location>
</feature>
<feature type="strand" evidence="5">
    <location>
        <begin position="23"/>
        <end position="25"/>
    </location>
</feature>
<feature type="strand" evidence="5">
    <location>
        <begin position="30"/>
        <end position="32"/>
    </location>
</feature>
<feature type="strand" evidence="5">
    <location>
        <begin position="34"/>
        <end position="38"/>
    </location>
</feature>
<feature type="strand" evidence="5">
    <location>
        <begin position="41"/>
        <end position="48"/>
    </location>
</feature>
<feature type="strand" evidence="5">
    <location>
        <begin position="57"/>
        <end position="59"/>
    </location>
</feature>
<feature type="strand" evidence="5">
    <location>
        <begin position="63"/>
        <end position="67"/>
    </location>
</feature>
<feature type="strand" evidence="5">
    <location>
        <begin position="69"/>
        <end position="74"/>
    </location>
</feature>
<feature type="helix" evidence="5">
    <location>
        <begin position="89"/>
        <end position="98"/>
    </location>
</feature>
<feature type="strand" evidence="5">
    <location>
        <begin position="101"/>
        <end position="108"/>
    </location>
</feature>
<feature type="helix" evidence="5">
    <location>
        <begin position="116"/>
        <end position="130"/>
    </location>
</feature>
<feature type="strand" evidence="5">
    <location>
        <begin position="132"/>
        <end position="141"/>
    </location>
</feature>
<feature type="helix" evidence="5">
    <location>
        <begin position="148"/>
        <end position="158"/>
    </location>
</feature>
<feature type="strand" evidence="5">
    <location>
        <begin position="163"/>
        <end position="168"/>
    </location>
</feature>
<feature type="turn" evidence="5">
    <location>
        <begin position="171"/>
        <end position="174"/>
    </location>
</feature>
<feature type="helix" evidence="5">
    <location>
        <begin position="178"/>
        <end position="190"/>
    </location>
</feature>
<feature type="strand" evidence="5">
    <location>
        <begin position="194"/>
        <end position="198"/>
    </location>
</feature>
<feature type="helix" evidence="5">
    <location>
        <begin position="202"/>
        <end position="214"/>
    </location>
</feature>
<feature type="helix" evidence="5">
    <location>
        <begin position="220"/>
        <end position="225"/>
    </location>
</feature>
<feature type="helix" evidence="5">
    <location>
        <begin position="229"/>
        <end position="246"/>
    </location>
</feature>
<feature type="strand" evidence="5">
    <location>
        <begin position="250"/>
        <end position="255"/>
    </location>
</feature>
<feature type="helix" evidence="5">
    <location>
        <begin position="258"/>
        <end position="269"/>
    </location>
</feature>
<feature type="strand" evidence="5">
    <location>
        <begin position="274"/>
        <end position="279"/>
    </location>
</feature>
<feature type="helix" evidence="5">
    <location>
        <begin position="280"/>
        <end position="284"/>
    </location>
</feature>
<feature type="helix" evidence="5">
    <location>
        <begin position="287"/>
        <end position="291"/>
    </location>
</feature>
<feature type="helix" evidence="5">
    <location>
        <begin position="295"/>
        <end position="300"/>
    </location>
</feature>
<feature type="helix" evidence="5">
    <location>
        <begin position="313"/>
        <end position="322"/>
    </location>
</feature>
<feature type="helix" evidence="5">
    <location>
        <begin position="338"/>
        <end position="341"/>
    </location>
</feature>
<feature type="helix" evidence="5">
    <location>
        <begin position="342"/>
        <end position="344"/>
    </location>
</feature>
<feature type="helix" evidence="5">
    <location>
        <begin position="348"/>
        <end position="350"/>
    </location>
</feature>
<feature type="turn" evidence="5">
    <location>
        <begin position="358"/>
        <end position="360"/>
    </location>
</feature>
<feature type="helix" evidence="5">
    <location>
        <begin position="361"/>
        <end position="369"/>
    </location>
</feature>
<feature type="turn" evidence="5">
    <location>
        <begin position="370"/>
        <end position="373"/>
    </location>
</feature>
<feature type="helix" evidence="5">
    <location>
        <begin position="377"/>
        <end position="384"/>
    </location>
</feature>
<feature type="helix" evidence="5">
    <location>
        <begin position="386"/>
        <end position="392"/>
    </location>
</feature>
<feature type="turn" evidence="5">
    <location>
        <begin position="395"/>
        <end position="397"/>
    </location>
</feature>
<feature type="strand" evidence="5">
    <location>
        <begin position="409"/>
        <end position="419"/>
    </location>
</feature>
<feature type="turn" evidence="5">
    <location>
        <begin position="422"/>
        <end position="424"/>
    </location>
</feature>
<feature type="strand" evidence="5">
    <location>
        <begin position="426"/>
        <end position="430"/>
    </location>
</feature>
<feature type="turn" evidence="5">
    <location>
        <begin position="433"/>
        <end position="436"/>
    </location>
</feature>
<feature type="strand" evidence="5">
    <location>
        <begin position="438"/>
        <end position="448"/>
    </location>
</feature>
<feature type="strand" evidence="5">
    <location>
        <begin position="451"/>
        <end position="455"/>
    </location>
</feature>
<feature type="helix" evidence="5">
    <location>
        <begin position="476"/>
        <end position="491"/>
    </location>
</feature>
<accession>O14531</accession>
<accession>B2RMQ1</accession>
<accession>D3DRG5</accession>
<accession>O00240</accession>
<accession>Q5T0Q7</accession>